<proteinExistence type="inferred from homology"/>
<keyword id="KW-1185">Reference proteome</keyword>
<keyword id="KW-0687">Ribonucleoprotein</keyword>
<keyword id="KW-0689">Ribosomal protein</keyword>
<accession>Q73JJ6</accession>
<gene>
    <name evidence="1" type="primary">rplL</name>
    <name type="ordered locus">TDE_2422</name>
</gene>
<dbReference type="EMBL" id="AE017226">
    <property type="protein sequence ID" value="AAS12940.1"/>
    <property type="molecule type" value="Genomic_DNA"/>
</dbReference>
<dbReference type="RefSeq" id="NP_973021.1">
    <property type="nucleotide sequence ID" value="NC_002967.9"/>
</dbReference>
<dbReference type="RefSeq" id="WP_002667605.1">
    <property type="nucleotide sequence ID" value="NC_002967.9"/>
</dbReference>
<dbReference type="SMR" id="Q73JJ6"/>
<dbReference type="STRING" id="243275.TDE_2422"/>
<dbReference type="PaxDb" id="243275-TDE_2422"/>
<dbReference type="GeneID" id="2739847"/>
<dbReference type="KEGG" id="tde:TDE_2422"/>
<dbReference type="PATRIC" id="fig|243275.7.peg.2289"/>
<dbReference type="eggNOG" id="COG0222">
    <property type="taxonomic scope" value="Bacteria"/>
</dbReference>
<dbReference type="HOGENOM" id="CLU_086499_3_0_12"/>
<dbReference type="OrthoDB" id="9811748at2"/>
<dbReference type="Proteomes" id="UP000008212">
    <property type="component" value="Chromosome"/>
</dbReference>
<dbReference type="GO" id="GO:0022625">
    <property type="term" value="C:cytosolic large ribosomal subunit"/>
    <property type="evidence" value="ECO:0007669"/>
    <property type="project" value="TreeGrafter"/>
</dbReference>
<dbReference type="GO" id="GO:0003729">
    <property type="term" value="F:mRNA binding"/>
    <property type="evidence" value="ECO:0007669"/>
    <property type="project" value="TreeGrafter"/>
</dbReference>
<dbReference type="GO" id="GO:0003735">
    <property type="term" value="F:structural constituent of ribosome"/>
    <property type="evidence" value="ECO:0007669"/>
    <property type="project" value="InterPro"/>
</dbReference>
<dbReference type="GO" id="GO:0006412">
    <property type="term" value="P:translation"/>
    <property type="evidence" value="ECO:0007669"/>
    <property type="project" value="UniProtKB-UniRule"/>
</dbReference>
<dbReference type="CDD" id="cd00387">
    <property type="entry name" value="Ribosomal_L7_L12"/>
    <property type="match status" value="1"/>
</dbReference>
<dbReference type="FunFam" id="3.30.1390.10:FF:000001">
    <property type="entry name" value="50S ribosomal protein L7/L12"/>
    <property type="match status" value="1"/>
</dbReference>
<dbReference type="Gene3D" id="3.30.1390.10">
    <property type="match status" value="1"/>
</dbReference>
<dbReference type="Gene3D" id="1.20.5.710">
    <property type="entry name" value="Single helix bin"/>
    <property type="match status" value="1"/>
</dbReference>
<dbReference type="HAMAP" id="MF_00368">
    <property type="entry name" value="Ribosomal_bL12"/>
    <property type="match status" value="1"/>
</dbReference>
<dbReference type="InterPro" id="IPR000206">
    <property type="entry name" value="Ribosomal_bL12"/>
</dbReference>
<dbReference type="InterPro" id="IPR013823">
    <property type="entry name" value="Ribosomal_bL12_C"/>
</dbReference>
<dbReference type="InterPro" id="IPR014719">
    <property type="entry name" value="Ribosomal_bL12_C/ClpS-like"/>
</dbReference>
<dbReference type="InterPro" id="IPR008932">
    <property type="entry name" value="Ribosomal_bL12_oligo"/>
</dbReference>
<dbReference type="InterPro" id="IPR036235">
    <property type="entry name" value="Ribosomal_bL12_oligo_N_sf"/>
</dbReference>
<dbReference type="NCBIfam" id="TIGR00855">
    <property type="entry name" value="L12"/>
    <property type="match status" value="1"/>
</dbReference>
<dbReference type="PANTHER" id="PTHR45987">
    <property type="entry name" value="39S RIBOSOMAL PROTEIN L12"/>
    <property type="match status" value="1"/>
</dbReference>
<dbReference type="PANTHER" id="PTHR45987:SF4">
    <property type="entry name" value="LARGE RIBOSOMAL SUBUNIT PROTEIN BL12M"/>
    <property type="match status" value="1"/>
</dbReference>
<dbReference type="Pfam" id="PF00542">
    <property type="entry name" value="Ribosomal_L12"/>
    <property type="match status" value="1"/>
</dbReference>
<dbReference type="Pfam" id="PF16320">
    <property type="entry name" value="Ribosomal_L12_N"/>
    <property type="match status" value="1"/>
</dbReference>
<dbReference type="SUPFAM" id="SSF54736">
    <property type="entry name" value="ClpS-like"/>
    <property type="match status" value="1"/>
</dbReference>
<dbReference type="SUPFAM" id="SSF48300">
    <property type="entry name" value="Ribosomal protein L7/12, oligomerisation (N-terminal) domain"/>
    <property type="match status" value="1"/>
</dbReference>
<feature type="chain" id="PRO_0000243522" description="Large ribosomal subunit protein bL12">
    <location>
        <begin position="1"/>
        <end position="129"/>
    </location>
</feature>
<protein>
    <recommendedName>
        <fullName evidence="1">Large ribosomal subunit protein bL12</fullName>
    </recommendedName>
    <alternativeName>
        <fullName evidence="2">50S ribosomal protein L7/L12</fullName>
    </alternativeName>
</protein>
<sequence length="129" mass="13223">MAALTNEQIIEAIGEKTILELSELIKAMEEKFGVTAAAPVAVVAGGAAGGGAAEEEKTEFTVTLKGLSDPGKKIGVIKEVRNVIPGLGLKEAKELVEGAPKVLKEDVSKEEAAKIKEAITAAGGEVEIA</sequence>
<reference key="1">
    <citation type="journal article" date="2004" name="Proc. Natl. Acad. Sci. U.S.A.">
        <title>Comparison of the genome of the oral pathogen Treponema denticola with other spirochete genomes.</title>
        <authorList>
            <person name="Seshadri R."/>
            <person name="Myers G.S.A."/>
            <person name="Tettelin H."/>
            <person name="Eisen J.A."/>
            <person name="Heidelberg J.F."/>
            <person name="Dodson R.J."/>
            <person name="Davidsen T.M."/>
            <person name="DeBoy R.T."/>
            <person name="Fouts D.E."/>
            <person name="Haft D.H."/>
            <person name="Selengut J."/>
            <person name="Ren Q."/>
            <person name="Brinkac L.M."/>
            <person name="Madupu R."/>
            <person name="Kolonay J.F."/>
            <person name="Durkin S.A."/>
            <person name="Daugherty S.C."/>
            <person name="Shetty J."/>
            <person name="Shvartsbeyn A."/>
            <person name="Gebregeorgis E."/>
            <person name="Geer K."/>
            <person name="Tsegaye G."/>
            <person name="Malek J.A."/>
            <person name="Ayodeji B."/>
            <person name="Shatsman S."/>
            <person name="McLeod M.P."/>
            <person name="Smajs D."/>
            <person name="Howell J.K."/>
            <person name="Pal S."/>
            <person name="Amin A."/>
            <person name="Vashisth P."/>
            <person name="McNeill T.Z."/>
            <person name="Xiang Q."/>
            <person name="Sodergren E."/>
            <person name="Baca E."/>
            <person name="Weinstock G.M."/>
            <person name="Norris S.J."/>
            <person name="Fraser C.M."/>
            <person name="Paulsen I.T."/>
        </authorList>
    </citation>
    <scope>NUCLEOTIDE SEQUENCE [LARGE SCALE GENOMIC DNA]</scope>
    <source>
        <strain>ATCC 35405 / DSM 14222 / CIP 103919 / JCM 8153 / KCTC 15104</strain>
    </source>
</reference>
<name>RL7_TREDE</name>
<organism>
    <name type="scientific">Treponema denticola (strain ATCC 35405 / DSM 14222 / CIP 103919 / JCM 8153 / KCTC 15104)</name>
    <dbReference type="NCBI Taxonomy" id="243275"/>
    <lineage>
        <taxon>Bacteria</taxon>
        <taxon>Pseudomonadati</taxon>
        <taxon>Spirochaetota</taxon>
        <taxon>Spirochaetia</taxon>
        <taxon>Spirochaetales</taxon>
        <taxon>Treponemataceae</taxon>
        <taxon>Treponema</taxon>
    </lineage>
</organism>
<evidence type="ECO:0000255" key="1">
    <source>
        <dbReference type="HAMAP-Rule" id="MF_00368"/>
    </source>
</evidence>
<evidence type="ECO:0000305" key="2"/>
<comment type="function">
    <text evidence="1">Forms part of the ribosomal stalk which helps the ribosome interact with GTP-bound translation factors. Is thus essential for accurate translation.</text>
</comment>
<comment type="subunit">
    <text evidence="1">Homodimer. Part of the ribosomal stalk of the 50S ribosomal subunit. Forms a multimeric L10(L12)X complex, where L10 forms an elongated spine to which 2 to 4 L12 dimers bind in a sequential fashion. Binds GTP-bound translation factors.</text>
</comment>
<comment type="similarity">
    <text evidence="1">Belongs to the bacterial ribosomal protein bL12 family.</text>
</comment>